<gene>
    <name evidence="3" type="primary">PKZ1</name>
    <name type="ORF">PITG_06236</name>
</gene>
<feature type="chain" id="PRO_0000408774" description="Serine/threonine-protein kinase PKZ1">
    <location>
        <begin position="1"/>
        <end position="399"/>
    </location>
</feature>
<feature type="domain" description="Protein kinase" evidence="4">
    <location>
        <begin position="92"/>
        <end position="371"/>
    </location>
</feature>
<feature type="region of interest" description="Disordered" evidence="6">
    <location>
        <begin position="30"/>
        <end position="50"/>
    </location>
</feature>
<feature type="active site" description="Proton acceptor" evidence="1 4 5">
    <location>
        <position position="219"/>
    </location>
</feature>
<feature type="binding site" evidence="1 4">
    <location>
        <begin position="98"/>
        <end position="106"/>
    </location>
    <ligand>
        <name>ATP</name>
        <dbReference type="ChEBI" id="CHEBI:30616"/>
    </ligand>
</feature>
<feature type="binding site" evidence="1 4">
    <location>
        <position position="121"/>
    </location>
    <ligand>
        <name>ATP</name>
        <dbReference type="ChEBI" id="CHEBI:30616"/>
    </ligand>
</feature>
<reference evidence="8" key="1">
    <citation type="journal article" date="2009" name="Nature">
        <title>Genome sequence and analysis of the Irish potato famine pathogen Phytophthora infestans.</title>
        <authorList>
            <consortium name="The Broad Institute Genome Sequencing Platform"/>
            <person name="Haas B.J."/>
            <person name="Kamoun S."/>
            <person name="Zody M.C."/>
            <person name="Jiang R.H."/>
            <person name="Handsaker R.E."/>
            <person name="Cano L.M."/>
            <person name="Grabherr M."/>
            <person name="Kodira C.D."/>
            <person name="Raffaele S."/>
            <person name="Torto-Alalibo T."/>
            <person name="Bozkurt T.O."/>
            <person name="Ah-Fong A.M."/>
            <person name="Alvarado L."/>
            <person name="Anderson V.L."/>
            <person name="Armstrong M.R."/>
            <person name="Avrova A."/>
            <person name="Baxter L."/>
            <person name="Beynon J."/>
            <person name="Boevink P.C."/>
            <person name="Bollmann S.R."/>
            <person name="Bos J.I."/>
            <person name="Bulone V."/>
            <person name="Cai G."/>
            <person name="Cakir C."/>
            <person name="Carrington J.C."/>
            <person name="Chawner M."/>
            <person name="Conti L."/>
            <person name="Costanzo S."/>
            <person name="Ewan R."/>
            <person name="Fahlgren N."/>
            <person name="Fischbach M.A."/>
            <person name="Fugelstad J."/>
            <person name="Gilroy E.M."/>
            <person name="Gnerre S."/>
            <person name="Green P.J."/>
            <person name="Grenville-Briggs L.J."/>
            <person name="Griffith J."/>
            <person name="Grunwald N.J."/>
            <person name="Horn K."/>
            <person name="Horner N.R."/>
            <person name="Hu C.H."/>
            <person name="Huitema E."/>
            <person name="Jeong D.H."/>
            <person name="Jones A.M."/>
            <person name="Jones J.D."/>
            <person name="Jones R.W."/>
            <person name="Karlsson E.K."/>
            <person name="Kunjeti S.G."/>
            <person name="Lamour K."/>
            <person name="Liu Z."/>
            <person name="Ma L."/>
            <person name="Maclean D."/>
            <person name="Chibucos M.C."/>
            <person name="McDonald H."/>
            <person name="McWalters J."/>
            <person name="Meijer H.J."/>
            <person name="Morgan W."/>
            <person name="Morris P.F."/>
            <person name="Munro C.A."/>
            <person name="O'Neill K."/>
            <person name="Ospina-Giraldo M."/>
            <person name="Pinzon A."/>
            <person name="Pritchard L."/>
            <person name="Ramsahoye B."/>
            <person name="Ren Q."/>
            <person name="Restrepo S."/>
            <person name="Roy S."/>
            <person name="Sadanandom A."/>
            <person name="Savidor A."/>
            <person name="Schornack S."/>
            <person name="Schwartz D.C."/>
            <person name="Schumann U.D."/>
            <person name="Schwessinger B."/>
            <person name="Seyer L."/>
            <person name="Sharpe T."/>
            <person name="Silvar C."/>
            <person name="Song J."/>
            <person name="Studholme D.J."/>
            <person name="Sykes S."/>
            <person name="Thines M."/>
            <person name="van de Vondervoort P.J."/>
            <person name="Phuntumart V."/>
            <person name="Wawra S."/>
            <person name="Weide R."/>
            <person name="Win J."/>
            <person name="Young C."/>
            <person name="Zhou S."/>
            <person name="Fry W."/>
            <person name="Meyers B.C."/>
            <person name="van West P."/>
            <person name="Ristaino J."/>
            <person name="Govers F."/>
            <person name="Birch P.R."/>
            <person name="Whisson S.C."/>
            <person name="Judelson H.S."/>
            <person name="Nusbaum C."/>
        </authorList>
    </citation>
    <scope>NUCLEOTIDE SEQUENCE [LARGE SCALE GENOMIC DNA]</scope>
    <source>
        <strain evidence="8">T30-4</strain>
    </source>
</reference>
<keyword id="KW-0067">ATP-binding</keyword>
<keyword id="KW-0418">Kinase</keyword>
<keyword id="KW-0547">Nucleotide-binding</keyword>
<keyword id="KW-1185">Reference proteome</keyword>
<keyword id="KW-0723">Serine/threonine-protein kinase</keyword>
<keyword id="KW-0808">Transferase</keyword>
<proteinExistence type="inferred from homology"/>
<dbReference type="EC" id="2.7.11.1"/>
<dbReference type="EMBL" id="DS028125">
    <property type="protein sequence ID" value="EEY69750.1"/>
    <property type="molecule type" value="Genomic_DNA"/>
</dbReference>
<dbReference type="RefSeq" id="XP_002998397.1">
    <property type="nucleotide sequence ID" value="XM_002998351.1"/>
</dbReference>
<dbReference type="SMR" id="D0N4E2"/>
<dbReference type="STRING" id="403677.D0N4E2"/>
<dbReference type="EnsemblProtists" id="PITG_06236T0">
    <property type="protein sequence ID" value="PITG_06236T0"/>
    <property type="gene ID" value="PITG_06236"/>
</dbReference>
<dbReference type="GeneID" id="9465934"/>
<dbReference type="KEGG" id="pif:PITG_06236"/>
<dbReference type="VEuPathDB" id="FungiDB:PITG_06236"/>
<dbReference type="eggNOG" id="KOG0032">
    <property type="taxonomic scope" value="Eukaryota"/>
</dbReference>
<dbReference type="HOGENOM" id="CLU_000288_63_0_1"/>
<dbReference type="InParanoid" id="D0N4E2"/>
<dbReference type="OMA" id="SACDMWA"/>
<dbReference type="OrthoDB" id="40902at2759"/>
<dbReference type="Proteomes" id="UP000006643">
    <property type="component" value="Partially assembled WGS sequence"/>
</dbReference>
<dbReference type="GO" id="GO:0005524">
    <property type="term" value="F:ATP binding"/>
    <property type="evidence" value="ECO:0007669"/>
    <property type="project" value="UniProtKB-KW"/>
</dbReference>
<dbReference type="GO" id="GO:0106310">
    <property type="term" value="F:protein serine kinase activity"/>
    <property type="evidence" value="ECO:0007669"/>
    <property type="project" value="RHEA"/>
</dbReference>
<dbReference type="GO" id="GO:0004674">
    <property type="term" value="F:protein serine/threonine kinase activity"/>
    <property type="evidence" value="ECO:0007669"/>
    <property type="project" value="UniProtKB-KW"/>
</dbReference>
<dbReference type="Gene3D" id="3.30.200.20">
    <property type="entry name" value="Phosphorylase Kinase, domain 1"/>
    <property type="match status" value="1"/>
</dbReference>
<dbReference type="Gene3D" id="1.10.510.10">
    <property type="entry name" value="Transferase(Phosphotransferase) domain 1"/>
    <property type="match status" value="1"/>
</dbReference>
<dbReference type="InterPro" id="IPR011009">
    <property type="entry name" value="Kinase-like_dom_sf"/>
</dbReference>
<dbReference type="InterPro" id="IPR000719">
    <property type="entry name" value="Prot_kinase_dom"/>
</dbReference>
<dbReference type="InterPro" id="IPR017441">
    <property type="entry name" value="Protein_kinase_ATP_BS"/>
</dbReference>
<dbReference type="InterPro" id="IPR008271">
    <property type="entry name" value="Ser/Thr_kinase_AS"/>
</dbReference>
<dbReference type="PANTHER" id="PTHR24347">
    <property type="entry name" value="SERINE/THREONINE-PROTEIN KINASE"/>
    <property type="match status" value="1"/>
</dbReference>
<dbReference type="Pfam" id="PF00069">
    <property type="entry name" value="Pkinase"/>
    <property type="match status" value="1"/>
</dbReference>
<dbReference type="SMART" id="SM00220">
    <property type="entry name" value="S_TKc"/>
    <property type="match status" value="1"/>
</dbReference>
<dbReference type="SUPFAM" id="SSF56112">
    <property type="entry name" value="Protein kinase-like (PK-like)"/>
    <property type="match status" value="1"/>
</dbReference>
<dbReference type="PROSITE" id="PS00107">
    <property type="entry name" value="PROTEIN_KINASE_ATP"/>
    <property type="match status" value="1"/>
</dbReference>
<dbReference type="PROSITE" id="PS50011">
    <property type="entry name" value="PROTEIN_KINASE_DOM"/>
    <property type="match status" value="1"/>
</dbReference>
<dbReference type="PROSITE" id="PS00108">
    <property type="entry name" value="PROTEIN_KINASE_ST"/>
    <property type="match status" value="1"/>
</dbReference>
<name>PKZ1_PHYIT</name>
<organism>
    <name type="scientific">Phytophthora infestans (strain T30-4)</name>
    <name type="common">Potato late blight agent</name>
    <dbReference type="NCBI Taxonomy" id="403677"/>
    <lineage>
        <taxon>Eukaryota</taxon>
        <taxon>Sar</taxon>
        <taxon>Stramenopiles</taxon>
        <taxon>Oomycota</taxon>
        <taxon>Peronosporales</taxon>
        <taxon>Peronosporaceae</taxon>
        <taxon>Phytophthora</taxon>
    </lineage>
</organism>
<comment type="function">
    <text evidence="3">May regulate an early stage of the zoospore pathway.</text>
</comment>
<comment type="catalytic activity">
    <reaction evidence="2">
        <text>L-seryl-[protein] + ATP = O-phospho-L-seryl-[protein] + ADP + H(+)</text>
        <dbReference type="Rhea" id="RHEA:17989"/>
        <dbReference type="Rhea" id="RHEA-COMP:9863"/>
        <dbReference type="Rhea" id="RHEA-COMP:11604"/>
        <dbReference type="ChEBI" id="CHEBI:15378"/>
        <dbReference type="ChEBI" id="CHEBI:29999"/>
        <dbReference type="ChEBI" id="CHEBI:30616"/>
        <dbReference type="ChEBI" id="CHEBI:83421"/>
        <dbReference type="ChEBI" id="CHEBI:456216"/>
        <dbReference type="EC" id="2.7.11.1"/>
    </reaction>
</comment>
<comment type="catalytic activity">
    <reaction evidence="2">
        <text>L-threonyl-[protein] + ATP = O-phospho-L-threonyl-[protein] + ADP + H(+)</text>
        <dbReference type="Rhea" id="RHEA:46608"/>
        <dbReference type="Rhea" id="RHEA-COMP:11060"/>
        <dbReference type="Rhea" id="RHEA-COMP:11605"/>
        <dbReference type="ChEBI" id="CHEBI:15378"/>
        <dbReference type="ChEBI" id="CHEBI:30013"/>
        <dbReference type="ChEBI" id="CHEBI:30616"/>
        <dbReference type="ChEBI" id="CHEBI:61977"/>
        <dbReference type="ChEBI" id="CHEBI:456216"/>
        <dbReference type="EC" id="2.7.11.1"/>
    </reaction>
</comment>
<comment type="similarity">
    <text evidence="7">Belongs to the protein kinase superfamily. CAMK Ser/Thr protein kinase family.</text>
</comment>
<evidence type="ECO:0000250" key="1">
    <source>
        <dbReference type="UniProtKB" id="P28523"/>
    </source>
</evidence>
<evidence type="ECO:0000250" key="2">
    <source>
        <dbReference type="UniProtKB" id="P31749"/>
    </source>
</evidence>
<evidence type="ECO:0000250" key="3">
    <source>
        <dbReference type="UniProtKB" id="Q8GVC7"/>
    </source>
</evidence>
<evidence type="ECO:0000255" key="4">
    <source>
        <dbReference type="PROSITE-ProRule" id="PRU00159"/>
    </source>
</evidence>
<evidence type="ECO:0000255" key="5">
    <source>
        <dbReference type="PROSITE-ProRule" id="PRU10027"/>
    </source>
</evidence>
<evidence type="ECO:0000256" key="6">
    <source>
        <dbReference type="SAM" id="MobiDB-lite"/>
    </source>
</evidence>
<evidence type="ECO:0000305" key="7"/>
<evidence type="ECO:0000312" key="8">
    <source>
        <dbReference type="EMBL" id="EEY69750.1"/>
    </source>
</evidence>
<sequence>MLRLGRSAASEVSSIRNSLQLQLEQRGARPMQCAYQTQSHSNPEGAKRGRSPMSLAVMGAAALSVGLELQTDGIAQARAAMEPGTQLQRHKWQLFDQIGAGAFGVVRLGMHEESGEVAAVKIVPLENPNDQRSYPALEREIAALKLVKALGGHNSIVDLRDVYVEGRKLFLVTELARGGELFEQIVAYGSFPELKARDVAREMASALSFMHRHGLVHKDVKPENILMSARVVDHNSGVYRKSNRHESSSLVKLADFGSAGPASVNTNLEDIGTAAYLPPEVLNSGLCTSACDMWALGCVLYIMLSGSHPYDLDGMSADSVVEHRVKSEPVTFDFSAWDNVSPHAKDLISKLLVKDPTLRLTADQMLQHPWMNASAEAAAAGLRRPSPLLAGQPIPISPA</sequence>
<protein>
    <recommendedName>
        <fullName evidence="3">Serine/threonine-protein kinase PKZ1</fullName>
        <ecNumber>2.7.11.1</ecNumber>
    </recommendedName>
    <alternativeName>
        <fullName evidence="8">Cleavage-induced protein kinase</fullName>
    </alternativeName>
</protein>
<accession>D0N4E2</accession>